<organism>
    <name type="scientific">Bacillus subtilis (strain 168)</name>
    <dbReference type="NCBI Taxonomy" id="224308"/>
    <lineage>
        <taxon>Bacteria</taxon>
        <taxon>Bacillati</taxon>
        <taxon>Bacillota</taxon>
        <taxon>Bacilli</taxon>
        <taxon>Bacillales</taxon>
        <taxon>Bacillaceae</taxon>
        <taxon>Bacillus</taxon>
    </lineage>
</organism>
<keyword id="KW-1003">Cell membrane</keyword>
<keyword id="KW-0472">Membrane</keyword>
<keyword id="KW-0479">Metal-binding</keyword>
<keyword id="KW-1185">Reference proteome</keyword>
<keyword id="KW-0813">Transport</keyword>
<keyword id="KW-0862">Zinc</keyword>
<dbReference type="EMBL" id="AB006424">
    <property type="protein sequence ID" value="BAA33077.1"/>
    <property type="status" value="ALT_FRAME"/>
    <property type="molecule type" value="Genomic_DNA"/>
</dbReference>
<dbReference type="EMBL" id="AB006424">
    <property type="protein sequence ID" value="BAA33078.1"/>
    <property type="status" value="ALT_FRAME"/>
    <property type="molecule type" value="Genomic_DNA"/>
</dbReference>
<dbReference type="EMBL" id="AL009126">
    <property type="protein sequence ID" value="CAB11960.2"/>
    <property type="molecule type" value="Genomic_DNA"/>
</dbReference>
<dbReference type="RefSeq" id="NP_388065.2">
    <property type="nucleotide sequence ID" value="NC_000964.3"/>
</dbReference>
<dbReference type="RefSeq" id="WP_003234917.1">
    <property type="nucleotide sequence ID" value="NZ_OZ025638.1"/>
</dbReference>
<dbReference type="SMR" id="O34688"/>
<dbReference type="FunCoup" id="O34688">
    <property type="interactions" value="46"/>
</dbReference>
<dbReference type="STRING" id="224308.BSU01845"/>
<dbReference type="PaxDb" id="224308-BSU01845"/>
<dbReference type="EnsemblBacteria" id="CAB11960">
    <property type="protein sequence ID" value="CAB11960"/>
    <property type="gene ID" value="BSU_01845"/>
</dbReference>
<dbReference type="GeneID" id="938603"/>
<dbReference type="KEGG" id="bsu:BSU01845"/>
<dbReference type="PATRIC" id="fig|224308.179.peg.190"/>
<dbReference type="eggNOG" id="COG3002">
    <property type="taxonomic scope" value="Bacteria"/>
</dbReference>
<dbReference type="InParanoid" id="O34688"/>
<dbReference type="OrthoDB" id="9805101at2"/>
<dbReference type="PhylomeDB" id="O34688"/>
<dbReference type="BioCyc" id="BSUB:BSU01845-MONOMER"/>
<dbReference type="Proteomes" id="UP000001570">
    <property type="component" value="Chromosome"/>
</dbReference>
<dbReference type="GO" id="GO:0005886">
    <property type="term" value="C:plasma membrane"/>
    <property type="evidence" value="ECO:0007669"/>
    <property type="project" value="UniProtKB-SubCell"/>
</dbReference>
<dbReference type="GO" id="GO:0008270">
    <property type="term" value="F:zinc ion binding"/>
    <property type="evidence" value="ECO:0007669"/>
    <property type="project" value="UniProtKB-UniRule"/>
</dbReference>
<dbReference type="HAMAP" id="MF_01871">
    <property type="entry name" value="DabA"/>
    <property type="match status" value="1"/>
</dbReference>
<dbReference type="InterPro" id="IPR018752">
    <property type="entry name" value="DabA"/>
</dbReference>
<dbReference type="PANTHER" id="PTHR38344:SF1">
    <property type="entry name" value="INORGANIC CARBON TRANSPORTER SUBUNIT DABA-RELATED"/>
    <property type="match status" value="1"/>
</dbReference>
<dbReference type="PANTHER" id="PTHR38344">
    <property type="entry name" value="UPF0753 PROTEIN AQ_863"/>
    <property type="match status" value="1"/>
</dbReference>
<dbReference type="Pfam" id="PF10070">
    <property type="entry name" value="DabA"/>
    <property type="match status" value="1"/>
</dbReference>
<gene>
    <name evidence="1" type="primary">dabA</name>
    <name type="synonym">ybcC</name>
    <name type="ordered locus">BSU01845</name>
    <name type="ordered locus">BSU01840</name>
</gene>
<reference key="1">
    <citation type="submission" date="1997-07" db="EMBL/GenBank/DDBJ databases">
        <title>Sequence analysis of the 70kb region between 17 and 23 degree of the Bacillus subtilis chromosome.</title>
        <authorList>
            <person name="Haga K."/>
            <person name="Liu H."/>
            <person name="Yasumoto K."/>
            <person name="Takahashi H."/>
            <person name="Yoshikawa H."/>
        </authorList>
    </citation>
    <scope>NUCLEOTIDE SEQUENCE [GENOMIC DNA]</scope>
    <source>
        <strain>168</strain>
    </source>
</reference>
<reference key="2">
    <citation type="journal article" date="1997" name="Nature">
        <title>The complete genome sequence of the Gram-positive bacterium Bacillus subtilis.</title>
        <authorList>
            <person name="Kunst F."/>
            <person name="Ogasawara N."/>
            <person name="Moszer I."/>
            <person name="Albertini A.M."/>
            <person name="Alloni G."/>
            <person name="Azevedo V."/>
            <person name="Bertero M.G."/>
            <person name="Bessieres P."/>
            <person name="Bolotin A."/>
            <person name="Borchert S."/>
            <person name="Borriss R."/>
            <person name="Boursier L."/>
            <person name="Brans A."/>
            <person name="Braun M."/>
            <person name="Brignell S.C."/>
            <person name="Bron S."/>
            <person name="Brouillet S."/>
            <person name="Bruschi C.V."/>
            <person name="Caldwell B."/>
            <person name="Capuano V."/>
            <person name="Carter N.M."/>
            <person name="Choi S.-K."/>
            <person name="Codani J.-J."/>
            <person name="Connerton I.F."/>
            <person name="Cummings N.J."/>
            <person name="Daniel R.A."/>
            <person name="Denizot F."/>
            <person name="Devine K.M."/>
            <person name="Duesterhoeft A."/>
            <person name="Ehrlich S.D."/>
            <person name="Emmerson P.T."/>
            <person name="Entian K.-D."/>
            <person name="Errington J."/>
            <person name="Fabret C."/>
            <person name="Ferrari E."/>
            <person name="Foulger D."/>
            <person name="Fritz C."/>
            <person name="Fujita M."/>
            <person name="Fujita Y."/>
            <person name="Fuma S."/>
            <person name="Galizzi A."/>
            <person name="Galleron N."/>
            <person name="Ghim S.-Y."/>
            <person name="Glaser P."/>
            <person name="Goffeau A."/>
            <person name="Golightly E.J."/>
            <person name="Grandi G."/>
            <person name="Guiseppi G."/>
            <person name="Guy B.J."/>
            <person name="Haga K."/>
            <person name="Haiech J."/>
            <person name="Harwood C.R."/>
            <person name="Henaut A."/>
            <person name="Hilbert H."/>
            <person name="Holsappel S."/>
            <person name="Hosono S."/>
            <person name="Hullo M.-F."/>
            <person name="Itaya M."/>
            <person name="Jones L.-M."/>
            <person name="Joris B."/>
            <person name="Karamata D."/>
            <person name="Kasahara Y."/>
            <person name="Klaerr-Blanchard M."/>
            <person name="Klein C."/>
            <person name="Kobayashi Y."/>
            <person name="Koetter P."/>
            <person name="Koningstein G."/>
            <person name="Krogh S."/>
            <person name="Kumano M."/>
            <person name="Kurita K."/>
            <person name="Lapidus A."/>
            <person name="Lardinois S."/>
            <person name="Lauber J."/>
            <person name="Lazarevic V."/>
            <person name="Lee S.-M."/>
            <person name="Levine A."/>
            <person name="Liu H."/>
            <person name="Masuda S."/>
            <person name="Mauel C."/>
            <person name="Medigue C."/>
            <person name="Medina N."/>
            <person name="Mellado R.P."/>
            <person name="Mizuno M."/>
            <person name="Moestl D."/>
            <person name="Nakai S."/>
            <person name="Noback M."/>
            <person name="Noone D."/>
            <person name="O'Reilly M."/>
            <person name="Ogawa K."/>
            <person name="Ogiwara A."/>
            <person name="Oudega B."/>
            <person name="Park S.-H."/>
            <person name="Parro V."/>
            <person name="Pohl T.M."/>
            <person name="Portetelle D."/>
            <person name="Porwollik S."/>
            <person name="Prescott A.M."/>
            <person name="Presecan E."/>
            <person name="Pujic P."/>
            <person name="Purnelle B."/>
            <person name="Rapoport G."/>
            <person name="Rey M."/>
            <person name="Reynolds S."/>
            <person name="Rieger M."/>
            <person name="Rivolta C."/>
            <person name="Rocha E."/>
            <person name="Roche B."/>
            <person name="Rose M."/>
            <person name="Sadaie Y."/>
            <person name="Sato T."/>
            <person name="Scanlan E."/>
            <person name="Schleich S."/>
            <person name="Schroeter R."/>
            <person name="Scoffone F."/>
            <person name="Sekiguchi J."/>
            <person name="Sekowska A."/>
            <person name="Seror S.J."/>
            <person name="Serror P."/>
            <person name="Shin B.-S."/>
            <person name="Soldo B."/>
            <person name="Sorokin A."/>
            <person name="Tacconi E."/>
            <person name="Takagi T."/>
            <person name="Takahashi H."/>
            <person name="Takemaru K."/>
            <person name="Takeuchi M."/>
            <person name="Tamakoshi A."/>
            <person name="Tanaka T."/>
            <person name="Terpstra P."/>
            <person name="Tognoni A."/>
            <person name="Tosato V."/>
            <person name="Uchiyama S."/>
            <person name="Vandenbol M."/>
            <person name="Vannier F."/>
            <person name="Vassarotti A."/>
            <person name="Viari A."/>
            <person name="Wambutt R."/>
            <person name="Wedler E."/>
            <person name="Wedler H."/>
            <person name="Weitzenegger T."/>
            <person name="Winters P."/>
            <person name="Wipat A."/>
            <person name="Yamamoto H."/>
            <person name="Yamane K."/>
            <person name="Yasumoto K."/>
            <person name="Yata K."/>
            <person name="Yoshida K."/>
            <person name="Yoshikawa H.-F."/>
            <person name="Zumstein E."/>
            <person name="Yoshikawa H."/>
            <person name="Danchin A."/>
        </authorList>
    </citation>
    <scope>NUCLEOTIDE SEQUENCE [LARGE SCALE GENOMIC DNA]</scope>
    <source>
        <strain>168</strain>
    </source>
</reference>
<reference key="3">
    <citation type="journal article" date="2009" name="Microbiology">
        <title>From a consortium sequence to a unified sequence: the Bacillus subtilis 168 reference genome a decade later.</title>
        <authorList>
            <person name="Barbe V."/>
            <person name="Cruveiller S."/>
            <person name="Kunst F."/>
            <person name="Lenoble P."/>
            <person name="Meurice G."/>
            <person name="Sekowska A."/>
            <person name="Vallenet D."/>
            <person name="Wang T."/>
            <person name="Moszer I."/>
            <person name="Medigue C."/>
            <person name="Danchin A."/>
        </authorList>
    </citation>
    <scope>SEQUENCE REVISION</scope>
</reference>
<feature type="chain" id="PRO_0000387248" description="Probable inorganic carbon transporter subunit DabA">
    <location>
        <begin position="1"/>
        <end position="871"/>
    </location>
</feature>
<feature type="binding site" evidence="1">
    <location>
        <position position="396"/>
    </location>
    <ligand>
        <name>Zn(2+)</name>
        <dbReference type="ChEBI" id="CHEBI:29105"/>
    </ligand>
</feature>
<feature type="binding site" evidence="1">
    <location>
        <position position="398"/>
    </location>
    <ligand>
        <name>Zn(2+)</name>
        <dbReference type="ChEBI" id="CHEBI:29105"/>
    </ligand>
</feature>
<feature type="binding site" evidence="1">
    <location>
        <position position="577"/>
    </location>
    <ligand>
        <name>Zn(2+)</name>
        <dbReference type="ChEBI" id="CHEBI:29105"/>
    </ligand>
</feature>
<feature type="binding site" evidence="1">
    <location>
        <position position="592"/>
    </location>
    <ligand>
        <name>Zn(2+)</name>
        <dbReference type="ChEBI" id="CHEBI:29105"/>
    </ligand>
</feature>
<feature type="sequence conflict" description="In Ref. 1; BAA33078." evidence="2" ref="1">
    <original>E</original>
    <variation>D</variation>
    <location>
        <position position="623"/>
    </location>
</feature>
<feature type="sequence conflict" description="In Ref. 1; BAA33078." evidence="2" ref="1">
    <original>D</original>
    <variation>G</variation>
    <location>
        <position position="731"/>
    </location>
</feature>
<feature type="sequence conflict" description="In Ref. 1; BAA33078." evidence="2" ref="1">
    <original>L</original>
    <variation>F</variation>
    <location>
        <position position="738"/>
    </location>
</feature>
<feature type="sequence conflict" description="In Ref. 1; BAA33078." evidence="2" ref="1">
    <original>Y</original>
    <variation>H</variation>
    <location>
        <position position="837"/>
    </location>
</feature>
<name>DABA_BACSU</name>
<sequence length="871" mass="98767">MGITSVLTKDNVKKIDTDIDVQERDLNVFITSASRVIAPLWPISTFAARNPWMGLENQPFDQVASWLKNTRDVDIYPSASMIRSAKNKGEIDEDFVEMGLQRWLDSHSYHIPRDVAERFCHAALKLDPLPSDLLSSHELEKLVSECSGLDHIENVFMQPLSSYIENQDGERLVNILDHHVIKWSKLYLDDSQAGWTMPNREEGFYRAWQHLIQYDPALSKKQRERVKGWPKEAHLALQEALFALEIPESEIQTYLEGHLLSLPGWAGMMLWRSQQSSHEHALLTEYLAVRISMEWALIKPYLPLTNERSKKTISIAPLIAAWIHWGGLTLEEWSQMTASEQNEYLSFAYSFDEKLRKKLWLEAWEQTYTDRLSQKIISKQRETGREKSALAQLAFCIDVRSEPFRRQLEKEGPFETIGIAGFFGVPIATCELGSKHSHASLPIIQKPQNKIKEFADEDVFKKYNQRKQAIHSLSHTFKTMKQNALSSLLLPELSGPWLTLQMAARSFVPRKAGRFIRNLREAWLRKPDTKLSLHHDATEAEIPVGFTDEEKVNYARQALKMMGLTENIAPLVVICGHGSQSTNNPYSAALDCGACGGAAGGFNARVLAALCNLSEVREALLAEGIKIPEDTVFAAAEHNTTVDELHWLYVPELSEAAQEAFEQIEAVMPKVRHHVNAERLAQLPNFQSKLKNPKAEANRFAEDWSEIRPEWGLARNAAFIIGKRELTQDCDLEGRAFLHNYDWKQDESGELLANIIVGPGTVAQWINLQYYASTVAPHYYGSGNKATQTVTAGLGVMQGNASDLLAGLPWQSVMESDHEAYHSPLRLLILIQAPREYVERLLNHDSAFLQKVQNGWVRLASLDPEGCWESW</sequence>
<evidence type="ECO:0000255" key="1">
    <source>
        <dbReference type="HAMAP-Rule" id="MF_01871"/>
    </source>
</evidence>
<evidence type="ECO:0000305" key="2"/>
<proteinExistence type="inferred from homology"/>
<comment type="function">
    <text evidence="1">Part of an energy-coupled inorganic carbon pump.</text>
</comment>
<comment type="cofactor">
    <cofactor evidence="1">
        <name>Zn(2+)</name>
        <dbReference type="ChEBI" id="CHEBI:29105"/>
    </cofactor>
</comment>
<comment type="subunit">
    <text evidence="1">Forms a complex with DabB.</text>
</comment>
<comment type="subcellular location">
    <subcellularLocation>
        <location evidence="1">Cell membrane</location>
        <topology evidence="1">Peripheral membrane protein</topology>
    </subcellularLocation>
</comment>
<comment type="similarity">
    <text evidence="1">Belongs to the inorganic carbon transporter (TC 9.A.2) DabA family.</text>
</comment>
<comment type="sequence caution" evidence="2">
    <conflict type="frameshift">
        <sequence resource="EMBL-CDS" id="BAA33077"/>
    </conflict>
</comment>
<comment type="sequence caution" evidence="2">
    <conflict type="frameshift">
        <sequence resource="EMBL-CDS" id="BAA33078"/>
    </conflict>
</comment>
<accession>O34688</accession>
<accession>O87091</accession>
<accession>O87092</accession>
<protein>
    <recommendedName>
        <fullName evidence="1">Probable inorganic carbon transporter subunit DabA</fullName>
    </recommendedName>
</protein>